<dbReference type="EMBL" id="CP000948">
    <property type="protein sequence ID" value="ACB04007.1"/>
    <property type="molecule type" value="Genomic_DNA"/>
</dbReference>
<dbReference type="RefSeq" id="WP_001295377.1">
    <property type="nucleotide sequence ID" value="NC_010473.1"/>
</dbReference>
<dbReference type="SMR" id="B1XEJ1"/>
<dbReference type="GeneID" id="93779098"/>
<dbReference type="KEGG" id="ecd:ECDH10B_3078"/>
<dbReference type="HOGENOM" id="CLU_097408_2_1_6"/>
<dbReference type="GO" id="GO:0005829">
    <property type="term" value="C:cytosol"/>
    <property type="evidence" value="ECO:0007669"/>
    <property type="project" value="TreeGrafter"/>
</dbReference>
<dbReference type="GO" id="GO:0005960">
    <property type="term" value="C:glycine cleavage complex"/>
    <property type="evidence" value="ECO:0007669"/>
    <property type="project" value="InterPro"/>
</dbReference>
<dbReference type="GO" id="GO:0019464">
    <property type="term" value="P:glycine decarboxylation via glycine cleavage system"/>
    <property type="evidence" value="ECO:0007669"/>
    <property type="project" value="UniProtKB-UniRule"/>
</dbReference>
<dbReference type="CDD" id="cd06848">
    <property type="entry name" value="GCS_H"/>
    <property type="match status" value="1"/>
</dbReference>
<dbReference type="FunFam" id="2.40.50.100:FF:000011">
    <property type="entry name" value="Glycine cleavage system H protein"/>
    <property type="match status" value="1"/>
</dbReference>
<dbReference type="Gene3D" id="2.40.50.100">
    <property type="match status" value="1"/>
</dbReference>
<dbReference type="HAMAP" id="MF_00272">
    <property type="entry name" value="GcvH"/>
    <property type="match status" value="1"/>
</dbReference>
<dbReference type="InterPro" id="IPR003016">
    <property type="entry name" value="2-oxoA_DH_lipoyl-BS"/>
</dbReference>
<dbReference type="InterPro" id="IPR000089">
    <property type="entry name" value="Biotin_lipoyl"/>
</dbReference>
<dbReference type="InterPro" id="IPR002930">
    <property type="entry name" value="GCV_H"/>
</dbReference>
<dbReference type="InterPro" id="IPR033753">
    <property type="entry name" value="GCV_H/Fam206"/>
</dbReference>
<dbReference type="InterPro" id="IPR017453">
    <property type="entry name" value="GCV_H_sub"/>
</dbReference>
<dbReference type="InterPro" id="IPR011053">
    <property type="entry name" value="Single_hybrid_motif"/>
</dbReference>
<dbReference type="NCBIfam" id="TIGR00527">
    <property type="entry name" value="gcvH"/>
    <property type="match status" value="1"/>
</dbReference>
<dbReference type="NCBIfam" id="NF002270">
    <property type="entry name" value="PRK01202.1"/>
    <property type="match status" value="1"/>
</dbReference>
<dbReference type="PANTHER" id="PTHR11715">
    <property type="entry name" value="GLYCINE CLEAVAGE SYSTEM H PROTEIN"/>
    <property type="match status" value="1"/>
</dbReference>
<dbReference type="PANTHER" id="PTHR11715:SF3">
    <property type="entry name" value="GLYCINE CLEAVAGE SYSTEM H PROTEIN-RELATED"/>
    <property type="match status" value="1"/>
</dbReference>
<dbReference type="Pfam" id="PF01597">
    <property type="entry name" value="GCV_H"/>
    <property type="match status" value="1"/>
</dbReference>
<dbReference type="SUPFAM" id="SSF51230">
    <property type="entry name" value="Single hybrid motif"/>
    <property type="match status" value="1"/>
</dbReference>
<dbReference type="PROSITE" id="PS50968">
    <property type="entry name" value="BIOTINYL_LIPOYL"/>
    <property type="match status" value="1"/>
</dbReference>
<dbReference type="PROSITE" id="PS00189">
    <property type="entry name" value="LIPOYL"/>
    <property type="match status" value="1"/>
</dbReference>
<gene>
    <name evidence="1" type="primary">gcvH</name>
    <name type="ordered locus">ECDH10B_3078</name>
</gene>
<feature type="chain" id="PRO_1000114518" description="Glycine cleavage system H protein">
    <location>
        <begin position="1"/>
        <end position="129"/>
    </location>
</feature>
<feature type="domain" description="Lipoyl-binding" evidence="2">
    <location>
        <begin position="24"/>
        <end position="106"/>
    </location>
</feature>
<feature type="modified residue" description="N6-lipoyllysine" evidence="1">
    <location>
        <position position="65"/>
    </location>
</feature>
<comment type="function">
    <text evidence="1">The glycine cleavage system catalyzes the degradation of glycine. The H protein shuttles the methylamine group of glycine from the P protein to the T protein.</text>
</comment>
<comment type="cofactor">
    <cofactor evidence="1">
        <name>(R)-lipoate</name>
        <dbReference type="ChEBI" id="CHEBI:83088"/>
    </cofactor>
    <text evidence="1">Binds 1 lipoyl cofactor covalently.</text>
</comment>
<comment type="subunit">
    <text evidence="1">The glycine cleavage system is composed of four proteins: P, T, L and H.</text>
</comment>
<comment type="similarity">
    <text evidence="1">Belongs to the GcvH family.</text>
</comment>
<name>GCSH_ECODH</name>
<organism>
    <name type="scientific">Escherichia coli (strain K12 / DH10B)</name>
    <dbReference type="NCBI Taxonomy" id="316385"/>
    <lineage>
        <taxon>Bacteria</taxon>
        <taxon>Pseudomonadati</taxon>
        <taxon>Pseudomonadota</taxon>
        <taxon>Gammaproteobacteria</taxon>
        <taxon>Enterobacterales</taxon>
        <taxon>Enterobacteriaceae</taxon>
        <taxon>Escherichia</taxon>
    </lineage>
</organism>
<accession>B1XEJ1</accession>
<evidence type="ECO:0000255" key="1">
    <source>
        <dbReference type="HAMAP-Rule" id="MF_00272"/>
    </source>
</evidence>
<evidence type="ECO:0000255" key="2">
    <source>
        <dbReference type="PROSITE-ProRule" id="PRU01066"/>
    </source>
</evidence>
<sequence>MSNVPAELKYSKEHEWLRKEADGTYTVGITEHAQELLGDMVFVDLPEVGATVSAGDDCAVAESVKAASDIYAPVSGEIVAVNDALSDSPELVNSEPYAGGWIFKIKASDESELESLLDATAYEALLEDE</sequence>
<proteinExistence type="inferred from homology"/>
<protein>
    <recommendedName>
        <fullName evidence="1">Glycine cleavage system H protein</fullName>
    </recommendedName>
</protein>
<keyword id="KW-0450">Lipoyl</keyword>
<reference key="1">
    <citation type="journal article" date="2008" name="J. Bacteriol.">
        <title>The complete genome sequence of Escherichia coli DH10B: insights into the biology of a laboratory workhorse.</title>
        <authorList>
            <person name="Durfee T."/>
            <person name="Nelson R."/>
            <person name="Baldwin S."/>
            <person name="Plunkett G. III"/>
            <person name="Burland V."/>
            <person name="Mau B."/>
            <person name="Petrosino J.F."/>
            <person name="Qin X."/>
            <person name="Muzny D.M."/>
            <person name="Ayele M."/>
            <person name="Gibbs R.A."/>
            <person name="Csorgo B."/>
            <person name="Posfai G."/>
            <person name="Weinstock G.M."/>
            <person name="Blattner F.R."/>
        </authorList>
    </citation>
    <scope>NUCLEOTIDE SEQUENCE [LARGE SCALE GENOMIC DNA]</scope>
    <source>
        <strain>K12 / DH10B</strain>
    </source>
</reference>